<keyword id="KW-0002">3D-structure</keyword>
<keyword id="KW-0004">4Fe-4S</keyword>
<keyword id="KW-0148">Chlorophyll</keyword>
<keyword id="KW-0150">Chloroplast</keyword>
<keyword id="KW-0157">Chromophore</keyword>
<keyword id="KW-0249">Electron transport</keyword>
<keyword id="KW-0408">Iron</keyword>
<keyword id="KW-0411">Iron-sulfur</keyword>
<keyword id="KW-0460">Magnesium</keyword>
<keyword id="KW-0472">Membrane</keyword>
<keyword id="KW-0479">Metal-binding</keyword>
<keyword id="KW-0560">Oxidoreductase</keyword>
<keyword id="KW-0602">Photosynthesis</keyword>
<keyword id="KW-0603">Photosystem I</keyword>
<keyword id="KW-0934">Plastid</keyword>
<keyword id="KW-1185">Reference proteome</keyword>
<keyword id="KW-0793">Thylakoid</keyword>
<keyword id="KW-0812">Transmembrane</keyword>
<keyword id="KW-1133">Transmembrane helix</keyword>
<keyword id="KW-0813">Transport</keyword>
<dbReference type="EC" id="1.97.1.12" evidence="1"/>
<dbReference type="EMBL" id="AJ400848">
    <property type="protein sequence ID" value="CAB88726.1"/>
    <property type="molecule type" value="Genomic_DNA"/>
</dbReference>
<dbReference type="PIR" id="S00444">
    <property type="entry name" value="S00444"/>
</dbReference>
<dbReference type="RefSeq" id="NP_054933.1">
    <property type="nucleotide sequence ID" value="NC_002202.1"/>
</dbReference>
<dbReference type="PDB" id="9GRX">
    <property type="method" value="EM"/>
    <property type="resolution" value="3.19 A"/>
    <property type="chains" value="a=9-750"/>
</dbReference>
<dbReference type="PDBsum" id="9GRX"/>
<dbReference type="EMDB" id="EMD-51527"/>
<dbReference type="SMR" id="P06511"/>
<dbReference type="FunCoup" id="P06511">
    <property type="interactions" value="240"/>
</dbReference>
<dbReference type="STRING" id="3562.P06511"/>
<dbReference type="GeneID" id="2715602"/>
<dbReference type="KEGG" id="soe:2715602"/>
<dbReference type="InParanoid" id="P06511"/>
<dbReference type="OrthoDB" id="349at2759"/>
<dbReference type="Proteomes" id="UP001155700">
    <property type="component" value="Chloroplast Pltd"/>
</dbReference>
<dbReference type="GO" id="GO:0009535">
    <property type="term" value="C:chloroplast thylakoid membrane"/>
    <property type="evidence" value="ECO:0007669"/>
    <property type="project" value="UniProtKB-SubCell"/>
</dbReference>
<dbReference type="GO" id="GO:0009522">
    <property type="term" value="C:photosystem I"/>
    <property type="evidence" value="ECO:0007669"/>
    <property type="project" value="UniProtKB-KW"/>
</dbReference>
<dbReference type="GO" id="GO:0051539">
    <property type="term" value="F:4 iron, 4 sulfur cluster binding"/>
    <property type="evidence" value="ECO:0007669"/>
    <property type="project" value="UniProtKB-KW"/>
</dbReference>
<dbReference type="GO" id="GO:0016168">
    <property type="term" value="F:chlorophyll binding"/>
    <property type="evidence" value="ECO:0007669"/>
    <property type="project" value="UniProtKB-KW"/>
</dbReference>
<dbReference type="GO" id="GO:0009055">
    <property type="term" value="F:electron transfer activity"/>
    <property type="evidence" value="ECO:0007669"/>
    <property type="project" value="UniProtKB-UniRule"/>
</dbReference>
<dbReference type="GO" id="GO:0000287">
    <property type="term" value="F:magnesium ion binding"/>
    <property type="evidence" value="ECO:0007669"/>
    <property type="project" value="UniProtKB-UniRule"/>
</dbReference>
<dbReference type="GO" id="GO:0016491">
    <property type="term" value="F:oxidoreductase activity"/>
    <property type="evidence" value="ECO:0007669"/>
    <property type="project" value="UniProtKB-KW"/>
</dbReference>
<dbReference type="GO" id="GO:0015979">
    <property type="term" value="P:photosynthesis"/>
    <property type="evidence" value="ECO:0007669"/>
    <property type="project" value="UniProtKB-UniRule"/>
</dbReference>
<dbReference type="FunFam" id="1.20.1130.10:FF:000001">
    <property type="entry name" value="Photosystem I P700 chlorophyll a apoprotein A2"/>
    <property type="match status" value="1"/>
</dbReference>
<dbReference type="Gene3D" id="1.20.1130.10">
    <property type="entry name" value="Photosystem I PsaA/PsaB"/>
    <property type="match status" value="1"/>
</dbReference>
<dbReference type="HAMAP" id="MF_00458">
    <property type="entry name" value="PSI_PsaA"/>
    <property type="match status" value="1"/>
</dbReference>
<dbReference type="InterPro" id="IPR006243">
    <property type="entry name" value="PSI_PsaA"/>
</dbReference>
<dbReference type="InterPro" id="IPR001280">
    <property type="entry name" value="PSI_PsaA/B"/>
</dbReference>
<dbReference type="InterPro" id="IPR020586">
    <property type="entry name" value="PSI_PsaA/B_CS"/>
</dbReference>
<dbReference type="InterPro" id="IPR036408">
    <property type="entry name" value="PSI_PsaA/B_sf"/>
</dbReference>
<dbReference type="NCBIfam" id="TIGR01335">
    <property type="entry name" value="psaA"/>
    <property type="match status" value="1"/>
</dbReference>
<dbReference type="PANTHER" id="PTHR30128">
    <property type="entry name" value="OUTER MEMBRANE PROTEIN, OMPA-RELATED"/>
    <property type="match status" value="1"/>
</dbReference>
<dbReference type="PANTHER" id="PTHR30128:SF19">
    <property type="entry name" value="PHOTOSYSTEM I P700 CHLOROPHYLL A APOPROTEIN A1-RELATED"/>
    <property type="match status" value="1"/>
</dbReference>
<dbReference type="Pfam" id="PF00223">
    <property type="entry name" value="PsaA_PsaB"/>
    <property type="match status" value="1"/>
</dbReference>
<dbReference type="PIRSF" id="PIRSF002905">
    <property type="entry name" value="PSI_A"/>
    <property type="match status" value="1"/>
</dbReference>
<dbReference type="PRINTS" id="PR00257">
    <property type="entry name" value="PHOTSYSPSAAB"/>
</dbReference>
<dbReference type="SUPFAM" id="SSF81558">
    <property type="entry name" value="Photosystem I subunits PsaA/PsaB"/>
    <property type="match status" value="1"/>
</dbReference>
<dbReference type="PROSITE" id="PS00419">
    <property type="entry name" value="PHOTOSYSTEM_I_PSAAB"/>
    <property type="match status" value="1"/>
</dbReference>
<reference key="1">
    <citation type="journal article" date="1986" name="Curr. Genet.">
        <title>Nucleotide sequence of the clustered genes for two P700 chlorophyll a apoproteins of the photosystem I reaction center and the ribosomal protein S14 of the spinach plastid chromosome.</title>
        <authorList>
            <person name="Kirsch W."/>
            <person name="Seyer P."/>
            <person name="Herrmann R.G."/>
        </authorList>
    </citation>
    <scope>NUCLEOTIDE SEQUENCE [GENOMIC DNA]</scope>
    <source>
        <strain>cv. Geant d'hiver</strain>
        <strain>cv. Monatol</strain>
    </source>
</reference>
<reference key="2">
    <citation type="journal article" date="2001" name="Plant Mol. Biol.">
        <title>The plastid chromosome of spinach (Spinacia oleracea): complete nucleotide sequence and gene organization.</title>
        <authorList>
            <person name="Schmitz-Linneweber C."/>
            <person name="Maier R.M."/>
            <person name="Alcaraz J.-P."/>
            <person name="Cottet A."/>
            <person name="Herrmann R.G."/>
            <person name="Mache R."/>
        </authorList>
    </citation>
    <scope>NUCLEOTIDE SEQUENCE [LARGE SCALE GENOMIC DNA]</scope>
    <source>
        <strain>cv. Geant d'hiver</strain>
        <strain>cv. Monatol</strain>
    </source>
</reference>
<reference key="3">
    <citation type="journal article" date="1998" name="J. Biol. Chem.">
        <title>Three-dimensional structure of higher plant photosystem I determined by electron crystallography.</title>
        <authorList>
            <person name="Kitmitto A."/>
            <person name="Mustafa A.O."/>
            <person name="Holzenburg A."/>
            <person name="Ford R.C."/>
        </authorList>
    </citation>
    <scope>3D-STRUCTURE MODELING</scope>
</reference>
<reference key="4">
    <citation type="journal article" date="2003" name="Eur. J. Biochem.">
        <title>Reversed-phase HPLC determination of chlorophyll a' and phylloquinone in photosystem I of oxygenic photosynthetic organisms.</title>
        <authorList>
            <person name="Nakamura A."/>
            <person name="Akai M."/>
            <person name="Yoshida E."/>
            <person name="Taki T."/>
            <person name="Watanabe T."/>
        </authorList>
    </citation>
    <scope>PRESENCE OF CHLOROPHYLL A' IN PSI</scope>
</reference>
<organism>
    <name type="scientific">Spinacia oleracea</name>
    <name type="common">Spinach</name>
    <dbReference type="NCBI Taxonomy" id="3562"/>
    <lineage>
        <taxon>Eukaryota</taxon>
        <taxon>Viridiplantae</taxon>
        <taxon>Streptophyta</taxon>
        <taxon>Embryophyta</taxon>
        <taxon>Tracheophyta</taxon>
        <taxon>Spermatophyta</taxon>
        <taxon>Magnoliopsida</taxon>
        <taxon>eudicotyledons</taxon>
        <taxon>Gunneridae</taxon>
        <taxon>Pentapetalae</taxon>
        <taxon>Caryophyllales</taxon>
        <taxon>Chenopodiaceae</taxon>
        <taxon>Chenopodioideae</taxon>
        <taxon>Anserineae</taxon>
        <taxon>Spinacia</taxon>
    </lineage>
</organism>
<sequence length="750" mass="82985">MIIRSPEPEVKILVDRDPVKTSFEAWAKPGHFSRTIAKGPETTTWIWNLHADAHDFDSHTSDLEEISRKIFSAHFGQLSIIFLWLSGMYFHGARFSNYEAWLSDPTHIGPSAQVVWPIVGQEILNGDVGGGFRGIQITSGFFQIWRASGITSELQLYCTAIGALVFAALMLFAGWFHYHKAAPKLAWFQDVESMLNHHLAGLLGLGSLSWAGHQIHVSLPINQFLNAGVDPKEIPLPHELILNRDLLAQLYPSFAEGATPFFTLNWSKYADFLTFRGGLDPVTGGLWLTDTAHHHLAIAILFLIAGHMYRTNWGIGHGLKDILEAHKGPFTGQGHKGLYEILTTSWHAQLALNLAMLGSLTIVVAHHMYAMPPYPYLATDYGTQLSLFTHHMWIGGFLIVGAAAHAAIFMVRDYDPTTRYNDLLDRVLRHRDAIISHLNWACIFLGFHSFGLYIHNDTMSALGRPQDMFSDTAIQLQPVFAQWIQNTHALAPSATAPGATASTSLTWGGSDLVAVGGKVALLPIPLGTADFLVHHIHAFTIHVTVLILLKGVLFARSSRLIPDKANLGFRFPCDGPGRGGTCQVSAWDHVFLGLFWMYNSISVVIFHFSWKMQSDVWGSISDQGVVTHITGGNFAQSSITINGWLRDFLWAQASQVIQSYGSSLSAYGLFFLGAHFVWAFSLMFLFSGRGYWQELIESIVWAHNKLKVAPATQPRALSIVQGRAVGVTHYLLGGIATTWAFFLARIIAVG</sequence>
<protein>
    <recommendedName>
        <fullName evidence="1">Photosystem I P700 chlorophyll a apoprotein A1</fullName>
        <ecNumber evidence="1">1.97.1.12</ecNumber>
    </recommendedName>
    <alternativeName>
        <fullName evidence="1">PSI-A</fullName>
    </alternativeName>
    <alternativeName>
        <fullName evidence="1">PsaA</fullName>
    </alternativeName>
</protein>
<proteinExistence type="evidence at protein level"/>
<comment type="function">
    <text>PsaA and PsaB bind P700, the primary electron donor of photosystem I (PSI), as well as the electron acceptors A0, A1 and FX. PSI is a plastocyanin-ferredoxin oxidoreductase, converting photonic excitation into a charge separation, which transfers an electron from the donor P700 chlorophyll pair to the spectroscopically characterized acceptors A0, A1, FX, FA and FB in turn. Oxidized P700 is reduced on the lumenal side of the thylakoid membrane by plastocyanin.</text>
</comment>
<comment type="catalytic activity">
    <reaction evidence="1">
        <text>reduced [plastocyanin] + hnu + oxidized [2Fe-2S]-[ferredoxin] = oxidized [plastocyanin] + reduced [2Fe-2S]-[ferredoxin]</text>
        <dbReference type="Rhea" id="RHEA:30407"/>
        <dbReference type="Rhea" id="RHEA-COMP:10000"/>
        <dbReference type="Rhea" id="RHEA-COMP:10001"/>
        <dbReference type="Rhea" id="RHEA-COMP:10039"/>
        <dbReference type="Rhea" id="RHEA-COMP:10040"/>
        <dbReference type="ChEBI" id="CHEBI:29036"/>
        <dbReference type="ChEBI" id="CHEBI:30212"/>
        <dbReference type="ChEBI" id="CHEBI:33737"/>
        <dbReference type="ChEBI" id="CHEBI:33738"/>
        <dbReference type="ChEBI" id="CHEBI:49552"/>
        <dbReference type="EC" id="1.97.1.12"/>
    </reaction>
</comment>
<comment type="cofactor">
    <text evidence="1">P700 is a chlorophyll a/chlorophyll a' dimer, A0 is one or more chlorophyll a, A1 is one or both phylloquinones and FX is a shared 4Fe-4S iron-sulfur center.</text>
</comment>
<comment type="subunit">
    <text>The PsaA/B heterodimer binds the P700 chlorophyll special pair and subsequent electron acceptors. PSI consists of a core antenna complex that captures photons, and an electron transfer chain that converts photonic excitation into a charge separation. The eukaryotic PSI reaction center is composed of at least 11 subunits.</text>
</comment>
<comment type="subcellular location">
    <subcellularLocation>
        <location>Plastid</location>
        <location>Chloroplast thylakoid membrane</location>
        <topology>Multi-pass membrane protein</topology>
    </subcellularLocation>
</comment>
<comment type="similarity">
    <text evidence="1">Belongs to the PsaA/PsaB family.</text>
</comment>
<feature type="chain" id="PRO_0000088578" description="Photosystem I P700 chlorophyll a apoprotein A1">
    <location>
        <begin position="1"/>
        <end position="750"/>
    </location>
</feature>
<feature type="transmembrane region" description="Helical; Name=I" evidence="1">
    <location>
        <begin position="70"/>
        <end position="93"/>
    </location>
</feature>
<feature type="transmembrane region" description="Helical; Name=II" evidence="1">
    <location>
        <begin position="156"/>
        <end position="179"/>
    </location>
</feature>
<feature type="transmembrane region" description="Helical; Name=III" evidence="1">
    <location>
        <begin position="195"/>
        <end position="219"/>
    </location>
</feature>
<feature type="transmembrane region" description="Helical; Name=IV" evidence="1">
    <location>
        <begin position="291"/>
        <end position="309"/>
    </location>
</feature>
<feature type="transmembrane region" description="Helical; Name=V" evidence="1">
    <location>
        <begin position="346"/>
        <end position="369"/>
    </location>
</feature>
<feature type="transmembrane region" description="Helical; Name=VI" evidence="1">
    <location>
        <begin position="385"/>
        <end position="411"/>
    </location>
</feature>
<feature type="transmembrane region" description="Helical; Name=VII" evidence="1">
    <location>
        <begin position="433"/>
        <end position="455"/>
    </location>
</feature>
<feature type="transmembrane region" description="Helical; Name=VIII" evidence="1">
    <location>
        <begin position="531"/>
        <end position="549"/>
    </location>
</feature>
<feature type="transmembrane region" description="Helical; Name=IX" evidence="1">
    <location>
        <begin position="589"/>
        <end position="610"/>
    </location>
</feature>
<feature type="transmembrane region" description="Helical; Name=X" evidence="1">
    <location>
        <begin position="664"/>
        <end position="686"/>
    </location>
</feature>
<feature type="transmembrane region" description="Helical; Name=XI" evidence="1">
    <location>
        <begin position="724"/>
        <end position="744"/>
    </location>
</feature>
<feature type="binding site" evidence="1">
    <location>
        <position position="573"/>
    </location>
    <ligand>
        <name>[4Fe-4S] cluster</name>
        <dbReference type="ChEBI" id="CHEBI:49883"/>
        <note>ligand shared between dimeric partners</note>
    </ligand>
</feature>
<feature type="binding site" evidence="1">
    <location>
        <position position="582"/>
    </location>
    <ligand>
        <name>[4Fe-4S] cluster</name>
        <dbReference type="ChEBI" id="CHEBI:49883"/>
        <note>ligand shared between dimeric partners</note>
    </ligand>
</feature>
<feature type="binding site" description="axial binding residue" evidence="1">
    <location>
        <position position="675"/>
    </location>
    <ligand>
        <name>chlorophyll a'</name>
        <dbReference type="ChEBI" id="CHEBI:189419"/>
        <label>A1</label>
    </ligand>
    <ligandPart>
        <name>Mg</name>
        <dbReference type="ChEBI" id="CHEBI:25107"/>
    </ligandPart>
</feature>
<feature type="binding site" description="axial binding residue" evidence="1">
    <location>
        <position position="683"/>
    </location>
    <ligand>
        <name>chlorophyll a</name>
        <dbReference type="ChEBI" id="CHEBI:58416"/>
        <label>A3</label>
    </ligand>
    <ligandPart>
        <name>Mg</name>
        <dbReference type="ChEBI" id="CHEBI:25107"/>
    </ligandPart>
</feature>
<feature type="binding site" evidence="1">
    <location>
        <position position="691"/>
    </location>
    <ligand>
        <name>chlorophyll a</name>
        <dbReference type="ChEBI" id="CHEBI:58416"/>
        <label>A3</label>
    </ligand>
</feature>
<feature type="binding site" evidence="1">
    <location>
        <position position="692"/>
    </location>
    <ligand>
        <name>phylloquinone</name>
        <dbReference type="ChEBI" id="CHEBI:18067"/>
        <label>A</label>
    </ligand>
</feature>
<accession>P06511</accession>
<geneLocation type="chloroplast"/>
<gene>
    <name evidence="1" type="primary">psaA</name>
</gene>
<evidence type="ECO:0000255" key="1">
    <source>
        <dbReference type="HAMAP-Rule" id="MF_00458"/>
    </source>
</evidence>
<name>PSAA_SPIOL</name>